<name>KRI1_DANRE</name>
<keyword id="KW-1185">Reference proteome</keyword>
<gene>
    <name type="primary">kri1</name>
    <name type="synonym">kri1l</name>
</gene>
<comment type="similarity">
    <text evidence="2">Belongs to the KRI1 family.</text>
</comment>
<evidence type="ECO:0000256" key="1">
    <source>
        <dbReference type="SAM" id="MobiDB-lite"/>
    </source>
</evidence>
<evidence type="ECO:0000305" key="2"/>
<organism>
    <name type="scientific">Danio rerio</name>
    <name type="common">Zebrafish</name>
    <name type="synonym">Brachydanio rerio</name>
    <dbReference type="NCBI Taxonomy" id="7955"/>
    <lineage>
        <taxon>Eukaryota</taxon>
        <taxon>Metazoa</taxon>
        <taxon>Chordata</taxon>
        <taxon>Craniata</taxon>
        <taxon>Vertebrata</taxon>
        <taxon>Euteleostomi</taxon>
        <taxon>Actinopterygii</taxon>
        <taxon>Neopterygii</taxon>
        <taxon>Teleostei</taxon>
        <taxon>Ostariophysi</taxon>
        <taxon>Cypriniformes</taxon>
        <taxon>Danionidae</taxon>
        <taxon>Danioninae</taxon>
        <taxon>Danio</taxon>
    </lineage>
</organism>
<reference key="1">
    <citation type="journal article" date="2004" name="Proc. Natl. Acad. Sci. U.S.A.">
        <title>Identification of 315 genes essential for early zebrafish development.</title>
        <authorList>
            <person name="Amsterdam A."/>
            <person name="Nissen R.M."/>
            <person name="Sun Z."/>
            <person name="Swindell E.C."/>
            <person name="Farrington S."/>
            <person name="Hopkins N."/>
        </authorList>
    </citation>
    <scope>NUCLEOTIDE SEQUENCE [LARGE SCALE MRNA]</scope>
</reference>
<proteinExistence type="evidence at transcript level"/>
<feature type="chain" id="PRO_0000298978" description="Protein KRI1 homolog">
    <location>
        <begin position="1"/>
        <end position="765"/>
    </location>
</feature>
<feature type="region of interest" description="Disordered" evidence="1">
    <location>
        <begin position="20"/>
        <end position="56"/>
    </location>
</feature>
<feature type="region of interest" description="Disordered" evidence="1">
    <location>
        <begin position="82"/>
        <end position="192"/>
    </location>
</feature>
<feature type="region of interest" description="Disordered" evidence="1">
    <location>
        <begin position="292"/>
        <end position="334"/>
    </location>
</feature>
<feature type="region of interest" description="Disordered" evidence="1">
    <location>
        <begin position="387"/>
        <end position="484"/>
    </location>
</feature>
<feature type="region of interest" description="Disordered" evidence="1">
    <location>
        <begin position="603"/>
        <end position="648"/>
    </location>
</feature>
<feature type="region of interest" description="Disordered" evidence="1">
    <location>
        <begin position="662"/>
        <end position="711"/>
    </location>
</feature>
<feature type="region of interest" description="Disordered" evidence="1">
    <location>
        <begin position="746"/>
        <end position="765"/>
    </location>
</feature>
<feature type="compositionally biased region" description="Basic and acidic residues" evidence="1">
    <location>
        <begin position="20"/>
        <end position="32"/>
    </location>
</feature>
<feature type="compositionally biased region" description="Polar residues" evidence="1">
    <location>
        <begin position="85"/>
        <end position="100"/>
    </location>
</feature>
<feature type="compositionally biased region" description="Basic and acidic residues" evidence="1">
    <location>
        <begin position="101"/>
        <end position="123"/>
    </location>
</feature>
<feature type="compositionally biased region" description="Basic and acidic residues" evidence="1">
    <location>
        <begin position="149"/>
        <end position="162"/>
    </location>
</feature>
<feature type="compositionally biased region" description="Basic and acidic residues" evidence="1">
    <location>
        <begin position="181"/>
        <end position="191"/>
    </location>
</feature>
<feature type="compositionally biased region" description="Basic and acidic residues" evidence="1">
    <location>
        <begin position="305"/>
        <end position="334"/>
    </location>
</feature>
<feature type="compositionally biased region" description="Acidic residues" evidence="1">
    <location>
        <begin position="387"/>
        <end position="409"/>
    </location>
</feature>
<feature type="compositionally biased region" description="Basic and acidic residues" evidence="1">
    <location>
        <begin position="424"/>
        <end position="436"/>
    </location>
</feature>
<feature type="compositionally biased region" description="Acidic residues" evidence="1">
    <location>
        <begin position="441"/>
        <end position="451"/>
    </location>
</feature>
<feature type="compositionally biased region" description="Basic and acidic residues" evidence="1">
    <location>
        <begin position="466"/>
        <end position="478"/>
    </location>
</feature>
<feature type="compositionally biased region" description="Basic residues" evidence="1">
    <location>
        <begin position="614"/>
        <end position="623"/>
    </location>
</feature>
<feature type="compositionally biased region" description="Basic and acidic residues" evidence="1">
    <location>
        <begin position="624"/>
        <end position="633"/>
    </location>
</feature>
<feature type="compositionally biased region" description="Basic and acidic residues" evidence="1">
    <location>
        <begin position="683"/>
        <end position="697"/>
    </location>
</feature>
<feature type="compositionally biased region" description="Basic residues" evidence="1">
    <location>
        <begin position="698"/>
        <end position="711"/>
    </location>
</feature>
<dbReference type="EMBL" id="AY648765">
    <property type="protein sequence ID" value="AAT68083.1"/>
    <property type="molecule type" value="mRNA"/>
</dbReference>
<dbReference type="RefSeq" id="NP_001002041.1">
    <property type="nucleotide sequence ID" value="NM_001002041.1"/>
</dbReference>
<dbReference type="SMR" id="Q6DRJ4"/>
<dbReference type="FunCoup" id="Q6DRJ4">
    <property type="interactions" value="2063"/>
</dbReference>
<dbReference type="STRING" id="7955.ENSDARP00000102009"/>
<dbReference type="PaxDb" id="7955-ENSDARP00000043882"/>
<dbReference type="GeneID" id="402800"/>
<dbReference type="KEGG" id="dre:402800"/>
<dbReference type="AGR" id="ZFIN:ZDB-GENE-040915-3"/>
<dbReference type="CTD" id="65095"/>
<dbReference type="ZFIN" id="ZDB-GENE-040915-3">
    <property type="gene designation" value="kri1"/>
</dbReference>
<dbReference type="eggNOG" id="KOG2409">
    <property type="taxonomic scope" value="Eukaryota"/>
</dbReference>
<dbReference type="InParanoid" id="Q6DRJ4"/>
<dbReference type="OrthoDB" id="10252032at2759"/>
<dbReference type="PhylomeDB" id="Q6DRJ4"/>
<dbReference type="PRO" id="PR:Q6DRJ4"/>
<dbReference type="Proteomes" id="UP000000437">
    <property type="component" value="Chromosome 3"/>
</dbReference>
<dbReference type="GO" id="GO:0030686">
    <property type="term" value="C:90S preribosome"/>
    <property type="evidence" value="ECO:0000318"/>
    <property type="project" value="GO_Central"/>
</dbReference>
<dbReference type="GO" id="GO:0005730">
    <property type="term" value="C:nucleolus"/>
    <property type="evidence" value="ECO:0000318"/>
    <property type="project" value="GO_Central"/>
</dbReference>
<dbReference type="GO" id="GO:0060216">
    <property type="term" value="P:definitive hemopoiesis"/>
    <property type="evidence" value="ECO:0000315"/>
    <property type="project" value="ZFIN"/>
</dbReference>
<dbReference type="GO" id="GO:0000447">
    <property type="term" value="P:endonucleolytic cleavage in ITS1 to separate SSU-rRNA from 5.8S rRNA and LSU-rRNA from tricistronic rRNA transcript (SSU-rRNA, 5.8S rRNA, LSU-rRNA)"/>
    <property type="evidence" value="ECO:0000318"/>
    <property type="project" value="GO_Central"/>
</dbReference>
<dbReference type="GO" id="GO:0042254">
    <property type="term" value="P:ribosome biogenesis"/>
    <property type="evidence" value="ECO:0000315"/>
    <property type="project" value="ZFIN"/>
</dbReference>
<dbReference type="InterPro" id="IPR018034">
    <property type="entry name" value="Kri1"/>
</dbReference>
<dbReference type="InterPro" id="IPR024626">
    <property type="entry name" value="Kri1-like_C"/>
</dbReference>
<dbReference type="PANTHER" id="PTHR14490:SF5">
    <property type="entry name" value="PROTEIN KRI1 HOMOLOG"/>
    <property type="match status" value="1"/>
</dbReference>
<dbReference type="PANTHER" id="PTHR14490">
    <property type="entry name" value="ZINC FINGER, ZZ TYPE"/>
    <property type="match status" value="1"/>
</dbReference>
<dbReference type="Pfam" id="PF05178">
    <property type="entry name" value="Kri1"/>
    <property type="match status" value="1"/>
</dbReference>
<dbReference type="Pfam" id="PF12936">
    <property type="entry name" value="Kri1_C"/>
    <property type="match status" value="1"/>
</dbReference>
<accession>Q6DRJ4</accession>
<protein>
    <recommendedName>
        <fullName>Protein KRI1 homolog</fullName>
    </recommendedName>
</protein>
<sequence>MSDLKINKKFAEKYEKYRQKEELQRLKDRYGDQEEENSSNSSESDSDDSEVELDPKLDRDFYRTLSLLKKKDPKIYQKDAKFYTEETSGSGSDEQPSTSKQSEKPMFLKDYERKVILERGGKYEDDDSADEEISAKMQERAASPTYIQEQKEIQESLRKFVQDSDDEDSDGDGQFLTRRTKTQEEKDKEEADYVEWLKGQTELDEKEELKDMKYLRDYWNNPQLDEKESFLRDFMLNKGYMEEEDEERIPTYNELMQDDVDDSEDEGESFLHKQEDFERHYNFRFEEPDAGKVKTYPRNIATSVRSKDDRRKRKREEVKERKEKEKEQKQQQLKELKNLKRAEIMDKLKKLQELTGNEQLAFNDVDLDGDFDPQQHDQLMQKVFGDEYYEENEEEKPQFEGDEEFEENWNWDTWVGKQQNEEEYDHKEDYTAEEHYQPNCDDPDFIMDADYDPSQQAVSKKKRKKEREEKKKKSKEDVPLMGKKRKKSHFAEIISKSKPVFDPNEKSFEQYLDEYYKLDFEDIIDDLPCRFRYREVVANDFGLSTDEILNAGDKELNRWCSLRKTCMYRSEREELCDLKNFQIKARNVKKKQQVFVSLFNENDGQEEQKDTKGKVGKKRRDRLKKAELTEKSDTTVTEETAEPPPAEQADVQDLKATIANDEEEDDEEFLVPKKKMKTAETVVTKRKEADVERTEKPKRPRKKMRRSGGRRLLKSMTVKMAGREFSRQRLQAYGLNPKRLHFRELYRQKRKEREKQEKQQKKSKQ</sequence>